<keyword id="KW-0002">3D-structure</keyword>
<keyword id="KW-1003">Cell membrane</keyword>
<keyword id="KW-0325">Glycoprotein</keyword>
<keyword id="KW-0461">Malaria</keyword>
<keyword id="KW-0472">Membrane</keyword>
<keyword id="KW-0677">Repeat</keyword>
<keyword id="KW-0732">Signal</keyword>
<proteinExistence type="evidence at protein level"/>
<reference key="1">
    <citation type="journal article" date="1986" name="Nucleic Acids Res.">
        <title>Structure of the RESA gene of Plasmodium falciparum.</title>
        <authorList>
            <person name="Favaloro J.M."/>
            <person name="Coppel R.L."/>
            <person name="Corcoran L.M."/>
            <person name="Foote S.J."/>
            <person name="Brown G.V."/>
            <person name="Anders R.F."/>
            <person name="Kemp D.J."/>
        </authorList>
    </citation>
    <scope>NUCLEOTIDE SEQUENCE [GENOMIC DNA / MRNA]</scope>
</reference>
<sequence length="1073" mass="124907">MRPFHAYSWIFSQQYMGTKNVKEKNPTIYSFDDEEKRNENKSFLKVLCSKRGVLPIIGILYIILNGNLGYNGSSSSGVQFTDRCSRNLYGETLPVNPYADSENPIVVSQVFGLPFEKPTFTLESPPDIDHTNILGFNEKFMTDVNRYRYSNNYEAIPHISEFNPLIVDKVLFDYNEKVDNLGRSGGDIIKKMQTLWDEIMDINKRKYDSLKEKLQKTYSQYKVQYDMPKEAYESKWTQCIKLIDQGGENLEERLNSQFKNWYRQKYLNLEEYRRLTVLNQIAWKALSNQIQYSCRKIMNSDISSFKHINELKSLEHRAAKAAEAEMKKRAQKPKKKKSRRGWLCCGGGDIETVEPQQEEPVQTVQEQQVNEYGDILPSLRASITNSAINYYDTVKDGVYLDHETSDALYTDEDLLFDLEKQKYMDMLDTSEEESVEENEEEHTVDDEHVEEHTADDEHVEEPTVADDEHVEEPTVADEHVEEPTVAEEHVEEPTVAEEHVEEPASDVQQTSEAAPTIEIPDTLYYDILGVGVNADMNEITERYFKLAENYYPYQRSGSTVFHNFRKVNEAYQVLGDIDKKRWYNKYGYDGIKQVNFMNPSIFYLLSSLEKFKDFTGTPQIVTLLRFFFEKRLSMNDLENKSEHLLKFMEQYQKEREAHVSEYLLNILQPCIAGDSKWNVPIITKLEGLKGSRFDIPILESLRWIFKHVAKTHLKKSSKSAKKLQQRTQANKQELANINNNLMSTLKEYLGSSEQMNSITYNFENINSNVDNGNQSKNISDLSYTDQKEILEKIVSYIVDISLYDIENTALNAAEQLLSDNSVDEKTLKKRAQSLKKLSSIMERYAGGKRNDKKSKNFDTKDIVGYIMHGISTINTEMKNQNENVPEHVQHNAEENVEHDAEENVEHDAEENVEHDAEENVEHDAEENVEHDAEENVEENVEEVEENVEENVEENVEENVEEVEENVEENVEENVEENVEENVEENVEENVEENVEENVEEYDEENVEEVEENVEENVEENVEENVEENVEEVEENVEENVEENVEENVEENVEENVEEYDEENVEEHNEEYDE</sequence>
<dbReference type="EMBL" id="X04572">
    <property type="protein sequence ID" value="CAA28241.1"/>
    <property type="molecule type" value="Genomic_DNA"/>
</dbReference>
<dbReference type="EMBL" id="X05182">
    <property type="protein sequence ID" value="CAA28817.1"/>
    <property type="molecule type" value="mRNA"/>
</dbReference>
<dbReference type="PIR" id="A25526">
    <property type="entry name" value="A25526"/>
</dbReference>
<dbReference type="PDB" id="2MUA">
    <property type="method" value="NMR"/>
    <property type="chains" value="A=181-200"/>
</dbReference>
<dbReference type="PDB" id="8US8">
    <property type="method" value="X-ray"/>
    <property type="resolution" value="2.56 A"/>
    <property type="chains" value="R=1041-1056"/>
</dbReference>
<dbReference type="PDBsum" id="2MUA"/>
<dbReference type="PDBsum" id="8US8"/>
<dbReference type="BMRB" id="P13830"/>
<dbReference type="SMR" id="P13830"/>
<dbReference type="DrugBank" id="DB11638">
    <property type="generic name" value="Artenimol"/>
</dbReference>
<dbReference type="GlyCosmos" id="P13830">
    <property type="glycosylation" value="4 sites, No reported glycans"/>
</dbReference>
<dbReference type="GO" id="GO:0005886">
    <property type="term" value="C:plasma membrane"/>
    <property type="evidence" value="ECO:0007669"/>
    <property type="project" value="UniProtKB-SubCell"/>
</dbReference>
<dbReference type="CDD" id="cd06257">
    <property type="entry name" value="DnaJ"/>
    <property type="match status" value="1"/>
</dbReference>
<dbReference type="Gene3D" id="1.10.287.110">
    <property type="entry name" value="DnaJ domain"/>
    <property type="match status" value="1"/>
</dbReference>
<dbReference type="Gene3D" id="6.10.280.180">
    <property type="entry name" value="Plasmodium RESA, N-terminal helical domain"/>
    <property type="match status" value="1"/>
</dbReference>
<dbReference type="InterPro" id="IPR001623">
    <property type="entry name" value="DnaJ_domain"/>
</dbReference>
<dbReference type="InterPro" id="IPR018253">
    <property type="entry name" value="DnaJ_domain_CS"/>
</dbReference>
<dbReference type="InterPro" id="IPR026894">
    <property type="entry name" value="DnaJ_X"/>
</dbReference>
<dbReference type="InterPro" id="IPR052423">
    <property type="entry name" value="EMIR"/>
</dbReference>
<dbReference type="InterPro" id="IPR036869">
    <property type="entry name" value="J_dom_sf"/>
</dbReference>
<dbReference type="InterPro" id="IPR019111">
    <property type="entry name" value="PRESA_N"/>
</dbReference>
<dbReference type="InterPro" id="IPR044885">
    <property type="entry name" value="PRESA_N_sf"/>
</dbReference>
<dbReference type="PANTHER" id="PTHR44094">
    <property type="entry name" value="DNAJ HEAT SHOCK N-TERMINAL DOMAIN-CONTAINING PROTEIN"/>
    <property type="match status" value="1"/>
</dbReference>
<dbReference type="PANTHER" id="PTHR44094:SF8">
    <property type="entry name" value="DNAJ HEAT SHOCK N-TERMINAL DOMAIN-CONTAINING PROTEIN-RELATED"/>
    <property type="match status" value="1"/>
</dbReference>
<dbReference type="Pfam" id="PF00226">
    <property type="entry name" value="DnaJ"/>
    <property type="match status" value="1"/>
</dbReference>
<dbReference type="Pfam" id="PF14308">
    <property type="entry name" value="DnaJ-X"/>
    <property type="match status" value="1"/>
</dbReference>
<dbReference type="Pfam" id="PF09687">
    <property type="entry name" value="PRESAN"/>
    <property type="match status" value="1"/>
</dbReference>
<dbReference type="PRINTS" id="PR00625">
    <property type="entry name" value="JDOMAIN"/>
</dbReference>
<dbReference type="SMART" id="SM00271">
    <property type="entry name" value="DnaJ"/>
    <property type="match status" value="1"/>
</dbReference>
<dbReference type="SUPFAM" id="SSF46565">
    <property type="entry name" value="Chaperone J-domain"/>
    <property type="match status" value="1"/>
</dbReference>
<dbReference type="SUPFAM" id="SSF69349">
    <property type="entry name" value="Phage fibre proteins"/>
    <property type="match status" value="1"/>
</dbReference>
<dbReference type="PROSITE" id="PS00636">
    <property type="entry name" value="DNAJ_1"/>
    <property type="match status" value="1"/>
</dbReference>
<dbReference type="PROSITE" id="PS50076">
    <property type="entry name" value="DNAJ_2"/>
    <property type="match status" value="1"/>
</dbReference>
<comment type="function">
    <text>May disrupt the normal intermolecular interactions of the cytoplasmic domain of band 3 and thereby facilitate the invagination of the red cell membrane which is necessary for the formation of the parasitophorous vacuole.</text>
</comment>
<comment type="subcellular location">
    <subcellularLocation>
        <location>Cell membrane</location>
        <topology>Peripheral membrane protein</topology>
        <orientation>Cytoplasmic side</orientation>
    </subcellularLocation>
    <text>Probably located on the cytoplasmic face of the membrane where it associates with components of the membrane skeleton.</text>
</comment>
<comment type="PTM">
    <text>The Tyr residues in the variant tetrameric sequences in the RESA repeat are possibly phosphorylated (by homology with band 3).</text>
</comment>
<organism>
    <name type="scientific">Plasmodium falciparum (isolate FC27 / Papua New Guinea)</name>
    <dbReference type="NCBI Taxonomy" id="5837"/>
    <lineage>
        <taxon>Eukaryota</taxon>
        <taxon>Sar</taxon>
        <taxon>Alveolata</taxon>
        <taxon>Apicomplexa</taxon>
        <taxon>Aconoidasida</taxon>
        <taxon>Haemosporida</taxon>
        <taxon>Plasmodiidae</taxon>
        <taxon>Plasmodium</taxon>
        <taxon>Plasmodium (Laverania)</taxon>
    </lineage>
</organism>
<gene>
    <name type="primary">RESA</name>
</gene>
<accession>P13830</accession>
<feature type="signal peptide">
    <location>
        <begin position="1"/>
        <end position="65"/>
    </location>
</feature>
<feature type="chain" id="PRO_0000007271" description="Ring-infected erythrocyte surface antigen">
    <location>
        <begin position="66"/>
        <end position="1073"/>
    </location>
</feature>
<feature type="domain" description="J" evidence="2">
    <location>
        <begin position="521"/>
        <end position="589"/>
    </location>
</feature>
<feature type="region of interest" description="Disordered" evidence="3">
    <location>
        <begin position="428"/>
        <end position="514"/>
    </location>
</feature>
<feature type="region of interest" description="Tandem repeats 1">
    <location>
        <begin position="436"/>
        <end position="504"/>
    </location>
</feature>
<feature type="region of interest" description="Tandem repeats 2">
    <location>
        <begin position="891"/>
        <end position="1073"/>
    </location>
</feature>
<feature type="region of interest" description="Disordered" evidence="3">
    <location>
        <begin position="894"/>
        <end position="1073"/>
    </location>
</feature>
<feature type="compositionally biased region" description="Acidic residues" evidence="3">
    <location>
        <begin position="428"/>
        <end position="444"/>
    </location>
</feature>
<feature type="compositionally biased region" description="Basic and acidic residues" evidence="3">
    <location>
        <begin position="445"/>
        <end position="456"/>
    </location>
</feature>
<feature type="compositionally biased region" description="Acidic residues" evidence="3">
    <location>
        <begin position="457"/>
        <end position="470"/>
    </location>
</feature>
<feature type="compositionally biased region" description="Basic and acidic residues" evidence="3">
    <location>
        <begin position="476"/>
        <end position="502"/>
    </location>
</feature>
<feature type="compositionally biased region" description="Basic and acidic residues" evidence="3">
    <location>
        <begin position="894"/>
        <end position="930"/>
    </location>
</feature>
<feature type="compositionally biased region" description="Acidic residues" evidence="3">
    <location>
        <begin position="931"/>
        <end position="1073"/>
    </location>
</feature>
<feature type="glycosylation site" description="N-linked (GlcNAc...) asparagine" evidence="1">
    <location>
        <position position="71"/>
    </location>
</feature>
<feature type="glycosylation site" description="N-linked (GlcNAc...) asparagine" evidence="1">
    <location>
        <position position="639"/>
    </location>
</feature>
<feature type="glycosylation site" description="N-linked (GlcNAc...) asparagine" evidence="1">
    <location>
        <position position="773"/>
    </location>
</feature>
<feature type="glycosylation site" description="N-linked (GlcNAc...) asparagine" evidence="1">
    <location>
        <position position="777"/>
    </location>
</feature>
<feature type="helix" evidence="4">
    <location>
        <begin position="184"/>
        <end position="199"/>
    </location>
</feature>
<protein>
    <recommendedName>
        <fullName>Ring-infected erythrocyte surface antigen</fullName>
    </recommendedName>
</protein>
<name>RESA_PLAFF</name>
<evidence type="ECO:0000255" key="1"/>
<evidence type="ECO:0000255" key="2">
    <source>
        <dbReference type="PROSITE-ProRule" id="PRU00286"/>
    </source>
</evidence>
<evidence type="ECO:0000256" key="3">
    <source>
        <dbReference type="SAM" id="MobiDB-lite"/>
    </source>
</evidence>
<evidence type="ECO:0007829" key="4">
    <source>
        <dbReference type="PDB" id="2MUA"/>
    </source>
</evidence>